<sequence>MKIVGDSEHFKQPYDSDEEYVSKTEDKRDCEAAQKVGMELVSLSKTQLDKIELDEHLYDSIQQAHKIKPKTEAYRRHMQYIGKLMRNVDVEPIKAALAIVLNKNNNETAKLQMFEKMRERLLSQGDSEIQTLVEHYPQLDRQKLRTLVRQATKELAKGPESKSSKELFKYLRSEIQD</sequence>
<evidence type="ECO:0000255" key="1">
    <source>
        <dbReference type="HAMAP-Rule" id="MF_00765"/>
    </source>
</evidence>
<evidence type="ECO:0000256" key="2">
    <source>
        <dbReference type="SAM" id="MobiDB-lite"/>
    </source>
</evidence>
<gene>
    <name evidence="1" type="primary">darP</name>
    <name type="ordered locus">Shewana3_3632</name>
</gene>
<organism>
    <name type="scientific">Shewanella sp. (strain ANA-3)</name>
    <dbReference type="NCBI Taxonomy" id="94122"/>
    <lineage>
        <taxon>Bacteria</taxon>
        <taxon>Pseudomonadati</taxon>
        <taxon>Pseudomonadota</taxon>
        <taxon>Gammaproteobacteria</taxon>
        <taxon>Alteromonadales</taxon>
        <taxon>Shewanellaceae</taxon>
        <taxon>Shewanella</taxon>
    </lineage>
</organism>
<reference key="1">
    <citation type="submission" date="2006-09" db="EMBL/GenBank/DDBJ databases">
        <title>Complete sequence of chromosome 1 of Shewanella sp. ANA-3.</title>
        <authorList>
            <person name="Copeland A."/>
            <person name="Lucas S."/>
            <person name="Lapidus A."/>
            <person name="Barry K."/>
            <person name="Detter J.C."/>
            <person name="Glavina del Rio T."/>
            <person name="Hammon N."/>
            <person name="Israni S."/>
            <person name="Dalin E."/>
            <person name="Tice H."/>
            <person name="Pitluck S."/>
            <person name="Chertkov O."/>
            <person name="Brettin T."/>
            <person name="Bruce D."/>
            <person name="Han C."/>
            <person name="Tapia R."/>
            <person name="Gilna P."/>
            <person name="Schmutz J."/>
            <person name="Larimer F."/>
            <person name="Land M."/>
            <person name="Hauser L."/>
            <person name="Kyrpides N."/>
            <person name="Kim E."/>
            <person name="Newman D."/>
            <person name="Salticov C."/>
            <person name="Konstantinidis K."/>
            <person name="Klappenback J."/>
            <person name="Tiedje J."/>
            <person name="Richardson P."/>
        </authorList>
    </citation>
    <scope>NUCLEOTIDE SEQUENCE [LARGE SCALE GENOMIC DNA]</scope>
    <source>
        <strain>ANA-3</strain>
    </source>
</reference>
<proteinExistence type="inferred from homology"/>
<feature type="chain" id="PRO_1000046803" description="Dual-action ribosomal maturation protein DarP">
    <location>
        <begin position="1"/>
        <end position="177"/>
    </location>
</feature>
<feature type="region of interest" description="Disordered" evidence="2">
    <location>
        <begin position="1"/>
        <end position="26"/>
    </location>
</feature>
<keyword id="KW-0963">Cytoplasm</keyword>
<keyword id="KW-0690">Ribosome biogenesis</keyword>
<keyword id="KW-0694">RNA-binding</keyword>
<keyword id="KW-0699">rRNA-binding</keyword>
<dbReference type="EMBL" id="CP000469">
    <property type="protein sequence ID" value="ABK49852.1"/>
    <property type="molecule type" value="Genomic_DNA"/>
</dbReference>
<dbReference type="SMR" id="A0L1D3"/>
<dbReference type="STRING" id="94122.Shewana3_3632"/>
<dbReference type="KEGG" id="shn:Shewana3_3632"/>
<dbReference type="eggNOG" id="COG3028">
    <property type="taxonomic scope" value="Bacteria"/>
</dbReference>
<dbReference type="HOGENOM" id="CLU_106757_2_0_6"/>
<dbReference type="OrthoDB" id="5293604at2"/>
<dbReference type="Proteomes" id="UP000002589">
    <property type="component" value="Chromosome"/>
</dbReference>
<dbReference type="GO" id="GO:0005829">
    <property type="term" value="C:cytosol"/>
    <property type="evidence" value="ECO:0007669"/>
    <property type="project" value="TreeGrafter"/>
</dbReference>
<dbReference type="GO" id="GO:0043022">
    <property type="term" value="F:ribosome binding"/>
    <property type="evidence" value="ECO:0007669"/>
    <property type="project" value="UniProtKB-UniRule"/>
</dbReference>
<dbReference type="GO" id="GO:0019843">
    <property type="term" value="F:rRNA binding"/>
    <property type="evidence" value="ECO:0007669"/>
    <property type="project" value="UniProtKB-UniRule"/>
</dbReference>
<dbReference type="GO" id="GO:1902626">
    <property type="term" value="P:assembly of large subunit precursor of preribosome"/>
    <property type="evidence" value="ECO:0007669"/>
    <property type="project" value="UniProtKB-UniRule"/>
</dbReference>
<dbReference type="CDD" id="cd16331">
    <property type="entry name" value="YjgA-like"/>
    <property type="match status" value="1"/>
</dbReference>
<dbReference type="Gene3D" id="1.10.60.30">
    <property type="entry name" value="PSPTO4464-like domains"/>
    <property type="match status" value="2"/>
</dbReference>
<dbReference type="HAMAP" id="MF_00765">
    <property type="entry name" value="DarP"/>
    <property type="match status" value="1"/>
</dbReference>
<dbReference type="InterPro" id="IPR006839">
    <property type="entry name" value="DarP"/>
</dbReference>
<dbReference type="InterPro" id="IPR023153">
    <property type="entry name" value="DarP_sf"/>
</dbReference>
<dbReference type="NCBIfam" id="NF003593">
    <property type="entry name" value="PRK05255.1-1"/>
    <property type="match status" value="1"/>
</dbReference>
<dbReference type="PANTHER" id="PTHR38101">
    <property type="entry name" value="UPF0307 PROTEIN YJGA"/>
    <property type="match status" value="1"/>
</dbReference>
<dbReference type="PANTHER" id="PTHR38101:SF1">
    <property type="entry name" value="UPF0307 PROTEIN YJGA"/>
    <property type="match status" value="1"/>
</dbReference>
<dbReference type="Pfam" id="PF04751">
    <property type="entry name" value="DarP"/>
    <property type="match status" value="1"/>
</dbReference>
<dbReference type="PIRSF" id="PIRSF016183">
    <property type="entry name" value="UCP016183"/>
    <property type="match status" value="1"/>
</dbReference>
<dbReference type="SUPFAM" id="SSF158710">
    <property type="entry name" value="PSPTO4464-like"/>
    <property type="match status" value="1"/>
</dbReference>
<name>DARP_SHESA</name>
<accession>A0L1D3</accession>
<protein>
    <recommendedName>
        <fullName evidence="1">Dual-action ribosomal maturation protein DarP</fullName>
    </recommendedName>
    <alternativeName>
        <fullName evidence="1">Large ribosomal subunit assembly factor DarP</fullName>
    </alternativeName>
</protein>
<comment type="function">
    <text evidence="1">Member of a network of 50S ribosomal subunit biogenesis factors which assembles along the 30S-50S interface, preventing incorrect 23S rRNA structures from forming. Promotes peptidyl transferase center (PTC) maturation.</text>
</comment>
<comment type="subcellular location">
    <subcellularLocation>
        <location evidence="1">Cytoplasm</location>
    </subcellularLocation>
    <text evidence="1">Associates with late stage pre-50S ribosomal subunits.</text>
</comment>
<comment type="similarity">
    <text evidence="1">Belongs to the DarP family.</text>
</comment>